<reference key="1">
    <citation type="journal article" date="1997" name="Nature">
        <title>The nucleotide sequence of Saccharomyces cerevisiae chromosome XVI.</title>
        <authorList>
            <person name="Bussey H."/>
            <person name="Storms R.K."/>
            <person name="Ahmed A."/>
            <person name="Albermann K."/>
            <person name="Allen E."/>
            <person name="Ansorge W."/>
            <person name="Araujo R."/>
            <person name="Aparicio A."/>
            <person name="Barrell B.G."/>
            <person name="Badcock K."/>
            <person name="Benes V."/>
            <person name="Botstein D."/>
            <person name="Bowman S."/>
            <person name="Brueckner M."/>
            <person name="Carpenter J."/>
            <person name="Cherry J.M."/>
            <person name="Chung E."/>
            <person name="Churcher C.M."/>
            <person name="Coster F."/>
            <person name="Davis K."/>
            <person name="Davis R.W."/>
            <person name="Dietrich F.S."/>
            <person name="Delius H."/>
            <person name="DiPaolo T."/>
            <person name="Dubois E."/>
            <person name="Duesterhoeft A."/>
            <person name="Duncan M."/>
            <person name="Floeth M."/>
            <person name="Fortin N."/>
            <person name="Friesen J.D."/>
            <person name="Fritz C."/>
            <person name="Goffeau A."/>
            <person name="Hall J."/>
            <person name="Hebling U."/>
            <person name="Heumann K."/>
            <person name="Hilbert H."/>
            <person name="Hillier L.W."/>
            <person name="Hunicke-Smith S."/>
            <person name="Hyman R.W."/>
            <person name="Johnston M."/>
            <person name="Kalman S."/>
            <person name="Kleine K."/>
            <person name="Komp C."/>
            <person name="Kurdi O."/>
            <person name="Lashkari D."/>
            <person name="Lew H."/>
            <person name="Lin A."/>
            <person name="Lin D."/>
            <person name="Louis E.J."/>
            <person name="Marathe R."/>
            <person name="Messenguy F."/>
            <person name="Mewes H.-W."/>
            <person name="Mirtipati S."/>
            <person name="Moestl D."/>
            <person name="Mueller-Auer S."/>
            <person name="Namath A."/>
            <person name="Nentwich U."/>
            <person name="Oefner P."/>
            <person name="Pearson D."/>
            <person name="Petel F.X."/>
            <person name="Pohl T.M."/>
            <person name="Purnelle B."/>
            <person name="Rajandream M.A."/>
            <person name="Rechmann S."/>
            <person name="Rieger M."/>
            <person name="Riles L."/>
            <person name="Roberts D."/>
            <person name="Schaefer M."/>
            <person name="Scharfe M."/>
            <person name="Scherens B."/>
            <person name="Schramm S."/>
            <person name="Schroeder M."/>
            <person name="Sdicu A.-M."/>
            <person name="Tettelin H."/>
            <person name="Urrestarazu L.A."/>
            <person name="Ushinsky S."/>
            <person name="Vierendeels F."/>
            <person name="Vissers S."/>
            <person name="Voss H."/>
            <person name="Walsh S.V."/>
            <person name="Wambutt R."/>
            <person name="Wang Y."/>
            <person name="Wedler E."/>
            <person name="Wedler H."/>
            <person name="Winnett E."/>
            <person name="Zhong W.-W."/>
            <person name="Zollner A."/>
            <person name="Vo D.H."/>
            <person name="Hani J."/>
        </authorList>
    </citation>
    <scope>NUCLEOTIDE SEQUENCE [LARGE SCALE GENOMIC DNA]</scope>
    <source>
        <strain>ATCC 204508 / S288c</strain>
    </source>
</reference>
<reference key="2">
    <citation type="journal article" date="2014" name="G3 (Bethesda)">
        <title>The reference genome sequence of Saccharomyces cerevisiae: Then and now.</title>
        <authorList>
            <person name="Engel S.R."/>
            <person name="Dietrich F.S."/>
            <person name="Fisk D.G."/>
            <person name="Binkley G."/>
            <person name="Balakrishnan R."/>
            <person name="Costanzo M.C."/>
            <person name="Dwight S.S."/>
            <person name="Hitz B.C."/>
            <person name="Karra K."/>
            <person name="Nash R.S."/>
            <person name="Weng S."/>
            <person name="Wong E.D."/>
            <person name="Lloyd P."/>
            <person name="Skrzypek M.S."/>
            <person name="Miyasato S.R."/>
            <person name="Simison M."/>
            <person name="Cherry J.M."/>
        </authorList>
    </citation>
    <scope>GENOME REANNOTATION</scope>
    <source>
        <strain>ATCC 204508 / S288c</strain>
    </source>
</reference>
<reference key="3">
    <citation type="journal article" date="2007" name="Genome Res.">
        <title>Approaching a complete repository of sequence-verified protein-encoding clones for Saccharomyces cerevisiae.</title>
        <authorList>
            <person name="Hu Y."/>
            <person name="Rolfs A."/>
            <person name="Bhullar B."/>
            <person name="Murthy T.V.S."/>
            <person name="Zhu C."/>
            <person name="Berger M.F."/>
            <person name="Camargo A.A."/>
            <person name="Kelley F."/>
            <person name="McCarron S."/>
            <person name="Jepson D."/>
            <person name="Richardson A."/>
            <person name="Raphael J."/>
            <person name="Moreira D."/>
            <person name="Taycher E."/>
            <person name="Zuo D."/>
            <person name="Mohr S."/>
            <person name="Kane M.F."/>
            <person name="Williamson J."/>
            <person name="Simpson A.J.G."/>
            <person name="Bulyk M.L."/>
            <person name="Harlow E."/>
            <person name="Marsischky G."/>
            <person name="Kolodner R.D."/>
            <person name="LaBaer J."/>
        </authorList>
    </citation>
    <scope>NUCLEOTIDE SEQUENCE [GENOMIC DNA]</scope>
    <source>
        <strain>ATCC 204508 / S288c</strain>
    </source>
</reference>
<reference key="4">
    <citation type="journal article" date="1998" name="Mol. Cell. Biol.">
        <title>Snt309p, a component of the Prp19p-associated complex that interacts with Prp19p and associates with the spliceosome simultaneously with or immediately after dissociation of U4 in the same manner as Prp19p.</title>
        <authorList>
            <person name="Chen H.-R."/>
            <person name="Jan S.-P."/>
            <person name="Tsao T.Y."/>
            <person name="Sheu Y.-J."/>
            <person name="Banroques J."/>
            <person name="Cheng S.-C."/>
        </authorList>
    </citation>
    <scope>FUNCTION</scope>
    <scope>IDENTIFICATION IN THE PRP19-ASSOCIATED COMPLEX</scope>
</reference>
<reference key="5">
    <citation type="journal article" date="1999" name="Proc. Natl. Acad. Sci. U.S.A.">
        <title>Snt309p modulates interactions of Prp19p with its associated components to stabilize the Prp19p-associated complex essential for pre-mRNA splicing.</title>
        <authorList>
            <person name="Chen H.-R."/>
            <person name="Tsao T.Y."/>
            <person name="Chen C.-H."/>
            <person name="Tsai W.-Y."/>
            <person name="Her L.-S."/>
            <person name="Hsu M.M.-T."/>
            <person name="Cheng S.-C."/>
        </authorList>
    </citation>
    <scope>FUNCTION</scope>
</reference>
<reference key="6">
    <citation type="journal article" date="2001" name="J. Biol. Chem.">
        <title>Identification and characterization of two novel components of the Prp19p-associated complex, Ntc30p and Ntc20p.</title>
        <authorList>
            <person name="Chen C.-H."/>
            <person name="Tsai W.-Y."/>
            <person name="Chen H.-R."/>
            <person name="Wang C.-H."/>
            <person name="Cheng S.-C."/>
        </authorList>
    </citation>
    <scope>INTERACTION WITH PRP19</scope>
</reference>
<reference key="7">
    <citation type="journal article" date="2002" name="Mol. Cell. Biol.">
        <title>Proteomics analysis reveals stable multiprotein complexes in both fission and budding yeasts containing Myb-related Cdc5p/Cef1p, novel pre-mRNA splicing factors, and snRNAs.</title>
        <authorList>
            <person name="Ohi M.D."/>
            <person name="Link A.J."/>
            <person name="Ren L."/>
            <person name="Jennings J.L."/>
            <person name="McDonald W.H."/>
            <person name="Gould K.L."/>
        </authorList>
    </citation>
    <scope>IDENTIFICATION IN THE CWC COMPLEX</scope>
    <scope>IDENTIFICATION BY MASS SPECTROMETRY</scope>
</reference>
<reference key="8">
    <citation type="journal article" date="2002" name="RNA">
        <title>Characterization of interactions among the Cef1p-Prp19p-associated splicing complex.</title>
        <authorList>
            <person name="Ohi M.D."/>
            <person name="Gould K.L."/>
        </authorList>
    </citation>
    <scope>INTERACTION WITH PRP19</scope>
</reference>
<reference key="9">
    <citation type="journal article" date="2003" name="Mol. Cell">
        <title>Assigning function to yeast proteins by integration of technologies.</title>
        <authorList>
            <person name="Hazbun T.R."/>
            <person name="Malmstroem L."/>
            <person name="Anderson S."/>
            <person name="Graczyk B.J."/>
            <person name="Fox B."/>
            <person name="Riffle M."/>
            <person name="Sundin B.A."/>
            <person name="Aranda J.D."/>
            <person name="McDonald W.H."/>
            <person name="Chiu C.-H."/>
            <person name="Snydsman B.E."/>
            <person name="Bradley P."/>
            <person name="Muller E.G.D."/>
            <person name="Fields S."/>
            <person name="Baker D."/>
            <person name="Yates J.R. III"/>
            <person name="Davis T.N."/>
        </authorList>
    </citation>
    <scope>IDENTIFICATION BY MASS SPECTROMETRY</scope>
</reference>
<reference key="10">
    <citation type="journal article" date="2003" name="Nature">
        <title>Global analysis of protein localization in budding yeast.</title>
        <authorList>
            <person name="Huh W.-K."/>
            <person name="Falvo J.V."/>
            <person name="Gerke L.C."/>
            <person name="Carroll A.S."/>
            <person name="Howson R.W."/>
            <person name="Weissman J.S."/>
            <person name="O'Shea E.K."/>
        </authorList>
    </citation>
    <scope>SUBCELLULAR LOCATION [LARGE SCALE ANALYSIS]</scope>
</reference>
<reference key="11">
    <citation type="journal article" date="2003" name="Nature">
        <title>Global analysis of protein expression in yeast.</title>
        <authorList>
            <person name="Ghaemmaghami S."/>
            <person name="Huh W.-K."/>
            <person name="Bower K."/>
            <person name="Howson R.W."/>
            <person name="Belle A."/>
            <person name="Dephoure N."/>
            <person name="O'Shea E.K."/>
            <person name="Weissman J.S."/>
        </authorList>
    </citation>
    <scope>LEVEL OF PROTEIN EXPRESSION [LARGE SCALE ANALYSIS]</scope>
</reference>
<gene>
    <name type="primary">SNT309</name>
    <name type="synonym">NTC25</name>
    <name type="ordered locus">YPR101W</name>
</gene>
<dbReference type="EMBL" id="U32445">
    <property type="protein sequence ID" value="AAB68071.1"/>
    <property type="molecule type" value="Genomic_DNA"/>
</dbReference>
<dbReference type="EMBL" id="AY693233">
    <property type="protein sequence ID" value="AAT93252.1"/>
    <property type="molecule type" value="Genomic_DNA"/>
</dbReference>
<dbReference type="EMBL" id="BK006949">
    <property type="protein sequence ID" value="DAA11515.1"/>
    <property type="molecule type" value="Genomic_DNA"/>
</dbReference>
<dbReference type="PIR" id="S59766">
    <property type="entry name" value="S59766"/>
</dbReference>
<dbReference type="RefSeq" id="NP_015426.1">
    <property type="nucleotide sequence ID" value="NM_001184198.1"/>
</dbReference>
<dbReference type="PDB" id="5GM6">
    <property type="method" value="EM"/>
    <property type="resolution" value="3.50 A"/>
    <property type="chains" value="t=1-175"/>
</dbReference>
<dbReference type="PDB" id="5GMK">
    <property type="method" value="EM"/>
    <property type="resolution" value="3.40 A"/>
    <property type="chains" value="t=1-175"/>
</dbReference>
<dbReference type="PDB" id="5LJ5">
    <property type="method" value="EM"/>
    <property type="resolution" value="3.80 A"/>
    <property type="chains" value="s=1-175"/>
</dbReference>
<dbReference type="PDB" id="5MQ0">
    <property type="method" value="EM"/>
    <property type="resolution" value="4.17 A"/>
    <property type="chains" value="s=1-175"/>
</dbReference>
<dbReference type="PDB" id="5WSG">
    <property type="method" value="EM"/>
    <property type="resolution" value="4.00 A"/>
    <property type="chains" value="t=1-175"/>
</dbReference>
<dbReference type="PDB" id="5Y88">
    <property type="method" value="EM"/>
    <property type="resolution" value="3.70 A"/>
    <property type="chains" value="G=1-175"/>
</dbReference>
<dbReference type="PDB" id="5YLZ">
    <property type="method" value="EM"/>
    <property type="resolution" value="3.60 A"/>
    <property type="chains" value="G=1-175"/>
</dbReference>
<dbReference type="PDB" id="6BK8">
    <property type="method" value="EM"/>
    <property type="resolution" value="3.30 A"/>
    <property type="chains" value="y=1-175"/>
</dbReference>
<dbReference type="PDB" id="6EXN">
    <property type="method" value="EM"/>
    <property type="resolution" value="3.70 A"/>
    <property type="chains" value="s=1-175"/>
</dbReference>
<dbReference type="PDB" id="6J6G">
    <property type="method" value="EM"/>
    <property type="resolution" value="3.20 A"/>
    <property type="chains" value="t=1-175"/>
</dbReference>
<dbReference type="PDB" id="6J6H">
    <property type="method" value="EM"/>
    <property type="resolution" value="3.60 A"/>
    <property type="chains" value="t=1-175"/>
</dbReference>
<dbReference type="PDB" id="6J6N">
    <property type="method" value="EM"/>
    <property type="resolution" value="3.86 A"/>
    <property type="chains" value="t=1-175"/>
</dbReference>
<dbReference type="PDB" id="6J6Q">
    <property type="method" value="EM"/>
    <property type="resolution" value="3.70 A"/>
    <property type="chains" value="t=1-175"/>
</dbReference>
<dbReference type="PDB" id="9DTR">
    <property type="method" value="EM"/>
    <property type="resolution" value="2.31 A"/>
    <property type="chains" value="s=1-175"/>
</dbReference>
<dbReference type="PDBsum" id="5GM6"/>
<dbReference type="PDBsum" id="5GMK"/>
<dbReference type="PDBsum" id="5LJ5"/>
<dbReference type="PDBsum" id="5MQ0"/>
<dbReference type="PDBsum" id="5WSG"/>
<dbReference type="PDBsum" id="5Y88"/>
<dbReference type="PDBsum" id="5YLZ"/>
<dbReference type="PDBsum" id="6BK8"/>
<dbReference type="PDBsum" id="6EXN"/>
<dbReference type="PDBsum" id="6J6G"/>
<dbReference type="PDBsum" id="6J6H"/>
<dbReference type="PDBsum" id="6J6N"/>
<dbReference type="PDBsum" id="6J6Q"/>
<dbReference type="PDBsum" id="9DTR"/>
<dbReference type="EMDB" id="EMD-0686"/>
<dbReference type="EMDB" id="EMD-0687"/>
<dbReference type="EMDB" id="EMD-0691"/>
<dbReference type="EMDB" id="EMD-0692"/>
<dbReference type="EMDB" id="EMD-3541"/>
<dbReference type="EMDB" id="EMD-3979"/>
<dbReference type="EMDB" id="EMD-4057"/>
<dbReference type="EMDB" id="EMD-47157"/>
<dbReference type="EMDB" id="EMD-6817"/>
<dbReference type="EMDB" id="EMD-6839"/>
<dbReference type="EMDB" id="EMD-7109"/>
<dbReference type="EMDB" id="EMD-9524"/>
<dbReference type="EMDB" id="EMD-9525"/>
<dbReference type="SMR" id="Q06091"/>
<dbReference type="BioGRID" id="36267">
    <property type="interactions" value="308"/>
</dbReference>
<dbReference type="ComplexPortal" id="CPX-1651">
    <property type="entry name" value="PRP19-associated complex"/>
</dbReference>
<dbReference type="ComplexPortal" id="CPX-1885">
    <property type="entry name" value="NineTeen complex"/>
</dbReference>
<dbReference type="DIP" id="DIP-2864N"/>
<dbReference type="FunCoup" id="Q06091">
    <property type="interactions" value="187"/>
</dbReference>
<dbReference type="IntAct" id="Q06091">
    <property type="interactions" value="48"/>
</dbReference>
<dbReference type="MINT" id="Q06091"/>
<dbReference type="STRING" id="4932.YPR101W"/>
<dbReference type="PaxDb" id="4932-YPR101W"/>
<dbReference type="PeptideAtlas" id="Q06091"/>
<dbReference type="EnsemblFungi" id="YPR101W_mRNA">
    <property type="protein sequence ID" value="YPR101W"/>
    <property type="gene ID" value="YPR101W"/>
</dbReference>
<dbReference type="GeneID" id="856216"/>
<dbReference type="KEGG" id="sce:YPR101W"/>
<dbReference type="AGR" id="SGD:S000006305"/>
<dbReference type="SGD" id="S000006305">
    <property type="gene designation" value="SNT309"/>
</dbReference>
<dbReference type="VEuPathDB" id="FungiDB:YPR101W"/>
<dbReference type="eggNOG" id="ENOG502S9WN">
    <property type="taxonomic scope" value="Eukaryota"/>
</dbReference>
<dbReference type="HOGENOM" id="CLU_119596_0_0_1"/>
<dbReference type="InParanoid" id="Q06091"/>
<dbReference type="OMA" id="YLRHQEL"/>
<dbReference type="OrthoDB" id="4059443at2759"/>
<dbReference type="BioCyc" id="YEAST:G3O-34241-MONOMER"/>
<dbReference type="BioGRID-ORCS" id="856216">
    <property type="hits" value="0 hits in 10 CRISPR screens"/>
</dbReference>
<dbReference type="PRO" id="PR:Q06091"/>
<dbReference type="Proteomes" id="UP000002311">
    <property type="component" value="Chromosome XVI"/>
</dbReference>
<dbReference type="RNAct" id="Q06091">
    <property type="molecule type" value="protein"/>
</dbReference>
<dbReference type="GO" id="GO:0000974">
    <property type="term" value="C:Prp19 complex"/>
    <property type="evidence" value="ECO:0000314"/>
    <property type="project" value="SGD"/>
</dbReference>
<dbReference type="GO" id="GO:0071006">
    <property type="term" value="C:U2-type catalytic step 1 spliceosome"/>
    <property type="evidence" value="ECO:0000314"/>
    <property type="project" value="SGD"/>
</dbReference>
<dbReference type="GO" id="GO:0000398">
    <property type="term" value="P:mRNA splicing, via spliceosome"/>
    <property type="evidence" value="ECO:0000315"/>
    <property type="project" value="SGD"/>
</dbReference>
<proteinExistence type="evidence at protein level"/>
<sequence>MDGLSFVDKGKIPDGYKNEIDQLVKKEFANIKREPVHPEIRGILAKRKGADNSVSTLTNALYTEYLKQRNNKKRRTPDFNDDDDTLFLEEYRRKYPRIDTSRYIPNESSEVSLLGIVDSYLKHQEIVLDTLLPQTVSNQWRINNDYIRQTCTIVEEMNIQQRKQINDLEIYRKRL</sequence>
<organism>
    <name type="scientific">Saccharomyces cerevisiae (strain ATCC 204508 / S288c)</name>
    <name type="common">Baker's yeast</name>
    <dbReference type="NCBI Taxonomy" id="559292"/>
    <lineage>
        <taxon>Eukaryota</taxon>
        <taxon>Fungi</taxon>
        <taxon>Dikarya</taxon>
        <taxon>Ascomycota</taxon>
        <taxon>Saccharomycotina</taxon>
        <taxon>Saccharomycetes</taxon>
        <taxon>Saccharomycetales</taxon>
        <taxon>Saccharomycetaceae</taxon>
        <taxon>Saccharomyces</taxon>
    </lineage>
</organism>
<name>SN309_YEAST</name>
<comment type="function">
    <text evidence="1 7">Involved in pre-mRNA splicing by stabilizing the NTC (or PRP19-associated complex). As a component of the NTC complex, associates to the spliceosome to mediate conformational rearrangement or to stabilize the structure of the spliceosome after U4 snRNA dissociation, which leads to spliceosome maturation.</text>
</comment>
<comment type="subunit">
    <text evidence="2 3 4 7">Belongs to the NTC complex (or PRP19-associated complex), composed of at least CEF1, CLF1, ISY1, NTC20, SNT309, SYF1, SYF2, and PRP19. The NTC complex associates with the spliceosome after the release of the U1 and U4 snRNAs and forms the CWC spliceosome subcomplex (or CEF1-associated complex) reminiscent of a late-stage spliceosome composed also of the U2, U5 and U6 snRNAs and at least BUD13, BUD31, BRR2, CDC40, CUS1, CWC2, CWC15, CWC21, CWC22, CWC23, CWC24, CWC25, CWC27, ECM2, HSH155, IST3, LEA1, MSL1, PRP8, PRP9, PRP11, PRP21, PRP22, PRP45, PRP46, SLU7, SMB1, SMD1, SMD2, SMD3, SMX2, SMX3, SNU114, SPP2, RSE1 and YJU2. Interacts with PRP19.</text>
</comment>
<comment type="interaction">
    <interactant intactId="EBI-818">
        <id>Q06091</id>
    </interactant>
    <interactant intactId="EBI-484">
        <id>Q12309</id>
        <label>CLF1</label>
    </interactant>
    <organismsDiffer>false</organismsDiffer>
    <experiments>5</experiments>
</comment>
<comment type="interaction">
    <interactant intactId="EBI-818">
        <id>Q06091</id>
    </interactant>
    <interactant intactId="EBI-20921">
        <id>P38302</id>
        <label>NTC20</label>
    </interactant>
    <organismsDiffer>false</organismsDiffer>
    <experiments>3</experiments>
</comment>
<comment type="interaction">
    <interactant intactId="EBI-818">
        <id>Q06091</id>
    </interactant>
    <interactant intactId="EBI-493">
        <id>P32523</id>
        <label>PRP19</label>
    </interactant>
    <organismsDiffer>false</organismsDiffer>
    <experiments>9</experiments>
</comment>
<comment type="subcellular location">
    <subcellularLocation>
        <location evidence="5">Nucleus</location>
    </subcellularLocation>
</comment>
<comment type="miscellaneous">
    <text evidence="6">Present with 721 molecules/cell in log phase SD medium.</text>
</comment>
<keyword id="KW-0002">3D-structure</keyword>
<keyword id="KW-0507">mRNA processing</keyword>
<keyword id="KW-0508">mRNA splicing</keyword>
<keyword id="KW-0539">Nucleus</keyword>
<keyword id="KW-1185">Reference proteome</keyword>
<keyword id="KW-0747">Spliceosome</keyword>
<evidence type="ECO:0000269" key="1">
    <source>
    </source>
</evidence>
<evidence type="ECO:0000269" key="2">
    <source>
    </source>
</evidence>
<evidence type="ECO:0000269" key="3">
    <source>
    </source>
</evidence>
<evidence type="ECO:0000269" key="4">
    <source>
    </source>
</evidence>
<evidence type="ECO:0000269" key="5">
    <source>
    </source>
</evidence>
<evidence type="ECO:0000269" key="6">
    <source>
    </source>
</evidence>
<evidence type="ECO:0000269" key="7">
    <source>
    </source>
</evidence>
<evidence type="ECO:0007829" key="8">
    <source>
        <dbReference type="PDB" id="5GMK"/>
    </source>
</evidence>
<evidence type="ECO:0007829" key="9">
    <source>
        <dbReference type="PDB" id="6J6G"/>
    </source>
</evidence>
<evidence type="ECO:0007829" key="10">
    <source>
        <dbReference type="PDB" id="9DTR"/>
    </source>
</evidence>
<feature type="chain" id="PRO_0000071999" description="Pre-mRNA-splicing factor SNT309">
    <location>
        <begin position="1"/>
        <end position="175"/>
    </location>
</feature>
<feature type="strand" evidence="9">
    <location>
        <begin position="5"/>
        <end position="7"/>
    </location>
</feature>
<feature type="turn" evidence="10">
    <location>
        <begin position="9"/>
        <end position="11"/>
    </location>
</feature>
<feature type="helix" evidence="10">
    <location>
        <begin position="14"/>
        <end position="30"/>
    </location>
</feature>
<feature type="helix" evidence="10">
    <location>
        <begin position="38"/>
        <end position="44"/>
    </location>
</feature>
<feature type="turn" evidence="10">
    <location>
        <begin position="45"/>
        <end position="47"/>
    </location>
</feature>
<feature type="helix" evidence="10">
    <location>
        <begin position="53"/>
        <end position="75"/>
    </location>
</feature>
<feature type="helix" evidence="10">
    <location>
        <begin position="83"/>
        <end position="94"/>
    </location>
</feature>
<feature type="helix" evidence="10">
    <location>
        <begin position="100"/>
        <end position="103"/>
    </location>
</feature>
<feature type="helix" evidence="8">
    <location>
        <begin position="104"/>
        <end position="109"/>
    </location>
</feature>
<feature type="helix" evidence="10">
    <location>
        <begin position="111"/>
        <end position="130"/>
    </location>
</feature>
<feature type="helix" evidence="10">
    <location>
        <begin position="132"/>
        <end position="174"/>
    </location>
</feature>
<accession>Q06091</accession>
<accession>D6W499</accession>
<protein>
    <recommendedName>
        <fullName>Pre-mRNA-splicing factor SNT309</fullName>
    </recommendedName>
    <alternativeName>
        <fullName>PRP19-associated complex protein 25</fullName>
    </alternativeName>
    <alternativeName>
        <fullName>Synergistic to PRP19 mutation protein 309</fullName>
    </alternativeName>
</protein>